<evidence type="ECO:0000255" key="1">
    <source>
        <dbReference type="HAMAP-Rule" id="MF_01218"/>
    </source>
</evidence>
<feature type="chain" id="PRO_0000120865" description="Uracil phosphoribosyltransferase">
    <location>
        <begin position="1"/>
        <end position="208"/>
    </location>
</feature>
<feature type="binding site" evidence="1">
    <location>
        <position position="78"/>
    </location>
    <ligand>
        <name>5-phospho-alpha-D-ribose 1-diphosphate</name>
        <dbReference type="ChEBI" id="CHEBI:58017"/>
    </ligand>
</feature>
<feature type="binding site" evidence="1">
    <location>
        <position position="103"/>
    </location>
    <ligand>
        <name>5-phospho-alpha-D-ribose 1-diphosphate</name>
        <dbReference type="ChEBI" id="CHEBI:58017"/>
    </ligand>
</feature>
<feature type="binding site" evidence="1">
    <location>
        <begin position="130"/>
        <end position="138"/>
    </location>
    <ligand>
        <name>5-phospho-alpha-D-ribose 1-diphosphate</name>
        <dbReference type="ChEBI" id="CHEBI:58017"/>
    </ligand>
</feature>
<feature type="binding site" evidence="1">
    <location>
        <position position="193"/>
    </location>
    <ligand>
        <name>uracil</name>
        <dbReference type="ChEBI" id="CHEBI:17568"/>
    </ligand>
</feature>
<feature type="binding site" evidence="1">
    <location>
        <begin position="198"/>
        <end position="200"/>
    </location>
    <ligand>
        <name>uracil</name>
        <dbReference type="ChEBI" id="CHEBI:17568"/>
    </ligand>
</feature>
<feature type="binding site" evidence="1">
    <location>
        <position position="199"/>
    </location>
    <ligand>
        <name>5-phospho-alpha-D-ribose 1-diphosphate</name>
        <dbReference type="ChEBI" id="CHEBI:58017"/>
    </ligand>
</feature>
<organism>
    <name type="scientific">Photorhabdus laumondii subsp. laumondii (strain DSM 15139 / CIP 105565 / TT01)</name>
    <name type="common">Photorhabdus luminescens subsp. laumondii</name>
    <dbReference type="NCBI Taxonomy" id="243265"/>
    <lineage>
        <taxon>Bacteria</taxon>
        <taxon>Pseudomonadati</taxon>
        <taxon>Pseudomonadota</taxon>
        <taxon>Gammaproteobacteria</taxon>
        <taxon>Enterobacterales</taxon>
        <taxon>Morganellaceae</taxon>
        <taxon>Photorhabdus</taxon>
    </lineage>
</organism>
<reference key="1">
    <citation type="journal article" date="2003" name="Nat. Biotechnol.">
        <title>The genome sequence of the entomopathogenic bacterium Photorhabdus luminescens.</title>
        <authorList>
            <person name="Duchaud E."/>
            <person name="Rusniok C."/>
            <person name="Frangeul L."/>
            <person name="Buchrieser C."/>
            <person name="Givaudan A."/>
            <person name="Taourit S."/>
            <person name="Bocs S."/>
            <person name="Boursaux-Eude C."/>
            <person name="Chandler M."/>
            <person name="Charles J.-F."/>
            <person name="Dassa E."/>
            <person name="Derose R."/>
            <person name="Derzelle S."/>
            <person name="Freyssinet G."/>
            <person name="Gaudriault S."/>
            <person name="Medigue C."/>
            <person name="Lanois A."/>
            <person name="Powell K."/>
            <person name="Siguier P."/>
            <person name="Vincent R."/>
            <person name="Wingate V."/>
            <person name="Zouine M."/>
            <person name="Glaser P."/>
            <person name="Boemare N."/>
            <person name="Danchin A."/>
            <person name="Kunst F."/>
        </authorList>
    </citation>
    <scope>NUCLEOTIDE SEQUENCE [LARGE SCALE GENOMIC DNA]</scope>
    <source>
        <strain>DSM 15139 / CIP 105565 / TT01</strain>
    </source>
</reference>
<proteinExistence type="inferred from homology"/>
<keyword id="KW-0021">Allosteric enzyme</keyword>
<keyword id="KW-0328">Glycosyltransferase</keyword>
<keyword id="KW-0342">GTP-binding</keyword>
<keyword id="KW-0460">Magnesium</keyword>
<keyword id="KW-0547">Nucleotide-binding</keyword>
<keyword id="KW-1185">Reference proteome</keyword>
<keyword id="KW-0808">Transferase</keyword>
<dbReference type="EC" id="2.4.2.9" evidence="1"/>
<dbReference type="EMBL" id="BX571868">
    <property type="protein sequence ID" value="CAE15133.1"/>
    <property type="molecule type" value="Genomic_DNA"/>
</dbReference>
<dbReference type="RefSeq" id="WP_011146979.1">
    <property type="nucleotide sequence ID" value="NC_005126.1"/>
</dbReference>
<dbReference type="SMR" id="Q7N3F8"/>
<dbReference type="STRING" id="243265.plu2759"/>
<dbReference type="GeneID" id="48849021"/>
<dbReference type="KEGG" id="plu:plu2759"/>
<dbReference type="eggNOG" id="COG0035">
    <property type="taxonomic scope" value="Bacteria"/>
</dbReference>
<dbReference type="HOGENOM" id="CLU_067096_2_2_6"/>
<dbReference type="OrthoDB" id="9781675at2"/>
<dbReference type="UniPathway" id="UPA00574">
    <property type="reaction ID" value="UER00636"/>
</dbReference>
<dbReference type="Proteomes" id="UP000002514">
    <property type="component" value="Chromosome"/>
</dbReference>
<dbReference type="GO" id="GO:0005525">
    <property type="term" value="F:GTP binding"/>
    <property type="evidence" value="ECO:0007669"/>
    <property type="project" value="UniProtKB-KW"/>
</dbReference>
<dbReference type="GO" id="GO:0000287">
    <property type="term" value="F:magnesium ion binding"/>
    <property type="evidence" value="ECO:0007669"/>
    <property type="project" value="UniProtKB-UniRule"/>
</dbReference>
<dbReference type="GO" id="GO:0004845">
    <property type="term" value="F:uracil phosphoribosyltransferase activity"/>
    <property type="evidence" value="ECO:0007669"/>
    <property type="project" value="UniProtKB-UniRule"/>
</dbReference>
<dbReference type="GO" id="GO:0044206">
    <property type="term" value="P:UMP salvage"/>
    <property type="evidence" value="ECO:0007669"/>
    <property type="project" value="UniProtKB-UniRule"/>
</dbReference>
<dbReference type="GO" id="GO:0006223">
    <property type="term" value="P:uracil salvage"/>
    <property type="evidence" value="ECO:0007669"/>
    <property type="project" value="InterPro"/>
</dbReference>
<dbReference type="CDD" id="cd06223">
    <property type="entry name" value="PRTases_typeI"/>
    <property type="match status" value="1"/>
</dbReference>
<dbReference type="FunFam" id="3.40.50.2020:FF:000003">
    <property type="entry name" value="Uracil phosphoribosyltransferase"/>
    <property type="match status" value="1"/>
</dbReference>
<dbReference type="Gene3D" id="3.40.50.2020">
    <property type="match status" value="1"/>
</dbReference>
<dbReference type="HAMAP" id="MF_01218_B">
    <property type="entry name" value="Upp_B"/>
    <property type="match status" value="1"/>
</dbReference>
<dbReference type="InterPro" id="IPR000836">
    <property type="entry name" value="PRibTrfase_dom"/>
</dbReference>
<dbReference type="InterPro" id="IPR029057">
    <property type="entry name" value="PRTase-like"/>
</dbReference>
<dbReference type="InterPro" id="IPR034332">
    <property type="entry name" value="Upp_B"/>
</dbReference>
<dbReference type="InterPro" id="IPR050054">
    <property type="entry name" value="UPRTase/APRTase"/>
</dbReference>
<dbReference type="InterPro" id="IPR005765">
    <property type="entry name" value="Ura_phspho_trans"/>
</dbReference>
<dbReference type="NCBIfam" id="NF001097">
    <property type="entry name" value="PRK00129.1"/>
    <property type="match status" value="1"/>
</dbReference>
<dbReference type="NCBIfam" id="TIGR01091">
    <property type="entry name" value="upp"/>
    <property type="match status" value="1"/>
</dbReference>
<dbReference type="PANTHER" id="PTHR32315">
    <property type="entry name" value="ADENINE PHOSPHORIBOSYLTRANSFERASE"/>
    <property type="match status" value="1"/>
</dbReference>
<dbReference type="PANTHER" id="PTHR32315:SF4">
    <property type="entry name" value="URACIL PHOSPHORIBOSYLTRANSFERASE, CHLOROPLASTIC"/>
    <property type="match status" value="1"/>
</dbReference>
<dbReference type="Pfam" id="PF14681">
    <property type="entry name" value="UPRTase"/>
    <property type="match status" value="1"/>
</dbReference>
<dbReference type="SUPFAM" id="SSF53271">
    <property type="entry name" value="PRTase-like"/>
    <property type="match status" value="1"/>
</dbReference>
<accession>Q7N3F8</accession>
<sequence length="208" mass="22503">MKIVEVNHPLVKHKLGLMRAHDISTKRFRELAAEIGSLLTYEATADLETEKVTIDGWCGPVVVEQIKGKKITVVPILRAGLGMMDGVLENVPSARISVVGVYRNEETLEPVPYFQKLASNIDERMALLVDPMLATGGSMIATIDLLKKAGCQSIKVLVLVAAPEGIAALEKAHPDVELYTASIDERLNEQGYIVPGLGDAGDKIFGTK</sequence>
<protein>
    <recommendedName>
        <fullName evidence="1">Uracil phosphoribosyltransferase</fullName>
        <ecNumber evidence="1">2.4.2.9</ecNumber>
    </recommendedName>
    <alternativeName>
        <fullName evidence="1">UMP pyrophosphorylase</fullName>
    </alternativeName>
    <alternativeName>
        <fullName evidence="1">UPRTase</fullName>
    </alternativeName>
</protein>
<comment type="function">
    <text evidence="1">Catalyzes the conversion of uracil and 5-phospho-alpha-D-ribose 1-diphosphate (PRPP) to UMP and diphosphate.</text>
</comment>
<comment type="catalytic activity">
    <reaction evidence="1">
        <text>UMP + diphosphate = 5-phospho-alpha-D-ribose 1-diphosphate + uracil</text>
        <dbReference type="Rhea" id="RHEA:13017"/>
        <dbReference type="ChEBI" id="CHEBI:17568"/>
        <dbReference type="ChEBI" id="CHEBI:33019"/>
        <dbReference type="ChEBI" id="CHEBI:57865"/>
        <dbReference type="ChEBI" id="CHEBI:58017"/>
        <dbReference type="EC" id="2.4.2.9"/>
    </reaction>
</comment>
<comment type="cofactor">
    <cofactor evidence="1">
        <name>Mg(2+)</name>
        <dbReference type="ChEBI" id="CHEBI:18420"/>
    </cofactor>
    <text evidence="1">Binds 1 Mg(2+) ion per subunit. The magnesium is bound as Mg-PRPP.</text>
</comment>
<comment type="activity regulation">
    <text evidence="1">Allosterically activated by GTP.</text>
</comment>
<comment type="pathway">
    <text evidence="1">Pyrimidine metabolism; UMP biosynthesis via salvage pathway; UMP from uracil: step 1/1.</text>
</comment>
<comment type="similarity">
    <text evidence="1">Belongs to the UPRTase family.</text>
</comment>
<name>UPP_PHOLL</name>
<gene>
    <name evidence="1" type="primary">upp</name>
    <name type="ordered locus">plu2759</name>
</gene>